<organism>
    <name type="scientific">Streptococcus pyogenes serotype M2 (strain MGAS10270)</name>
    <dbReference type="NCBI Taxonomy" id="370552"/>
    <lineage>
        <taxon>Bacteria</taxon>
        <taxon>Bacillati</taxon>
        <taxon>Bacillota</taxon>
        <taxon>Bacilli</taxon>
        <taxon>Lactobacillales</taxon>
        <taxon>Streptococcaceae</taxon>
        <taxon>Streptococcus</taxon>
    </lineage>
</organism>
<proteinExistence type="inferred from homology"/>
<gene>
    <name evidence="1" type="primary">hutI</name>
    <name type="ordered locus">MGAS10270_Spy1836</name>
</gene>
<reference key="1">
    <citation type="journal article" date="2006" name="Proc. Natl. Acad. Sci. U.S.A.">
        <title>Molecular genetic anatomy of inter- and intraserotype variation in the human bacterial pathogen group A Streptococcus.</title>
        <authorList>
            <person name="Beres S.B."/>
            <person name="Richter E.W."/>
            <person name="Nagiec M.J."/>
            <person name="Sumby P."/>
            <person name="Porcella S.F."/>
            <person name="DeLeo F.R."/>
            <person name="Musser J.M."/>
        </authorList>
    </citation>
    <scope>NUCLEOTIDE SEQUENCE [LARGE SCALE GENOMIC DNA]</scope>
    <source>
        <strain>MGAS10270</strain>
    </source>
</reference>
<keyword id="KW-0963">Cytoplasm</keyword>
<keyword id="KW-0369">Histidine metabolism</keyword>
<keyword id="KW-0378">Hydrolase</keyword>
<keyword id="KW-0408">Iron</keyword>
<keyword id="KW-0479">Metal-binding</keyword>
<keyword id="KW-0862">Zinc</keyword>
<sequence length="421" mass="45977">MVADVLLTHFNQLFCLNDPGHPLTGQEMKKATIVEDGYIAIKDGLIVALGSGEPDAELVGPQTIMRSYKGKIATPGIIDCHTHLVYGGSREHEFAKKLAGVSYLDILAQGGGILSTVRATRSASFDNLYQKSKRLLDYMLLHGVTTVEAKSGYGLDWETEKRQLDVVAALEKDHPIDLVSTFMAAHAIPEEYKGNPKAYLDVIIKDMLPVVKEENLAEFCDIFCEKNVFTADESRYLLSKAKEMGFKLRIHADEIASIGGVDVAAELSAVSAEHLMMITDDGIAKLIGAGVIGNLLPATTFSLMEDTYAPARKMIDAGMAITLSTDSNPGSCPTANMQFVMQLGCFMLRLTPLEVLNAVTINAAYSVNRQERVGSLTVGKEADIAIFDAPNIDYPFYFFATNLIHQVYKKGQLTVDRGRIL</sequence>
<protein>
    <recommendedName>
        <fullName evidence="1">Imidazolonepropionase</fullName>
        <ecNumber evidence="1">3.5.2.7</ecNumber>
    </recommendedName>
    <alternativeName>
        <fullName evidence="1">Imidazolone-5-propionate hydrolase</fullName>
    </alternativeName>
</protein>
<evidence type="ECO:0000255" key="1">
    <source>
        <dbReference type="HAMAP-Rule" id="MF_00372"/>
    </source>
</evidence>
<evidence type="ECO:0000305" key="2"/>
<comment type="function">
    <text evidence="1">Catalyzes the hydrolytic cleavage of the carbon-nitrogen bond in imidazolone-5-propanoate to yield N-formimidoyl-L-glutamate. It is the third step in the universal histidine degradation pathway.</text>
</comment>
<comment type="catalytic activity">
    <reaction evidence="1">
        <text>4-imidazolone-5-propanoate + H2O = N-formimidoyl-L-glutamate</text>
        <dbReference type="Rhea" id="RHEA:23660"/>
        <dbReference type="ChEBI" id="CHEBI:15377"/>
        <dbReference type="ChEBI" id="CHEBI:58928"/>
        <dbReference type="ChEBI" id="CHEBI:77893"/>
        <dbReference type="EC" id="3.5.2.7"/>
    </reaction>
</comment>
<comment type="cofactor">
    <cofactor evidence="1">
        <name>Zn(2+)</name>
        <dbReference type="ChEBI" id="CHEBI:29105"/>
    </cofactor>
    <cofactor evidence="1">
        <name>Fe(3+)</name>
        <dbReference type="ChEBI" id="CHEBI:29034"/>
    </cofactor>
    <text evidence="1">Binds 1 zinc or iron ion per subunit.</text>
</comment>
<comment type="pathway">
    <text evidence="1">Amino-acid degradation; L-histidine degradation into L-glutamate; N-formimidoyl-L-glutamate from L-histidine: step 3/3.</text>
</comment>
<comment type="subcellular location">
    <subcellularLocation>
        <location evidence="1">Cytoplasm</location>
    </subcellularLocation>
</comment>
<comment type="similarity">
    <text evidence="1">Belongs to the metallo-dependent hydrolases superfamily. HutI family.</text>
</comment>
<comment type="sequence caution" evidence="2">
    <conflict type="erroneous initiation">
        <sequence resource="EMBL-CDS" id="ABF34901"/>
    </conflict>
</comment>
<accession>Q1JEK8</accession>
<dbReference type="EC" id="3.5.2.7" evidence="1"/>
<dbReference type="EMBL" id="CP000260">
    <property type="protein sequence ID" value="ABF34901.1"/>
    <property type="status" value="ALT_INIT"/>
    <property type="molecule type" value="Genomic_DNA"/>
</dbReference>
<dbReference type="SMR" id="Q1JEK8"/>
<dbReference type="KEGG" id="sph:MGAS10270_Spy1836"/>
<dbReference type="HOGENOM" id="CLU_041647_0_1_9"/>
<dbReference type="UniPathway" id="UPA00379">
    <property type="reaction ID" value="UER00551"/>
</dbReference>
<dbReference type="Proteomes" id="UP000002436">
    <property type="component" value="Chromosome"/>
</dbReference>
<dbReference type="GO" id="GO:0005737">
    <property type="term" value="C:cytoplasm"/>
    <property type="evidence" value="ECO:0007669"/>
    <property type="project" value="UniProtKB-SubCell"/>
</dbReference>
<dbReference type="GO" id="GO:0050480">
    <property type="term" value="F:imidazolonepropionase activity"/>
    <property type="evidence" value="ECO:0007669"/>
    <property type="project" value="UniProtKB-UniRule"/>
</dbReference>
<dbReference type="GO" id="GO:0005506">
    <property type="term" value="F:iron ion binding"/>
    <property type="evidence" value="ECO:0007669"/>
    <property type="project" value="UniProtKB-UniRule"/>
</dbReference>
<dbReference type="GO" id="GO:0008270">
    <property type="term" value="F:zinc ion binding"/>
    <property type="evidence" value="ECO:0007669"/>
    <property type="project" value="UniProtKB-UniRule"/>
</dbReference>
<dbReference type="GO" id="GO:0019556">
    <property type="term" value="P:L-histidine catabolic process to glutamate and formamide"/>
    <property type="evidence" value="ECO:0007669"/>
    <property type="project" value="UniProtKB-UniPathway"/>
</dbReference>
<dbReference type="GO" id="GO:0019557">
    <property type="term" value="P:L-histidine catabolic process to glutamate and formate"/>
    <property type="evidence" value="ECO:0007669"/>
    <property type="project" value="UniProtKB-UniPathway"/>
</dbReference>
<dbReference type="CDD" id="cd01296">
    <property type="entry name" value="Imidazolone-5PH"/>
    <property type="match status" value="1"/>
</dbReference>
<dbReference type="FunFam" id="3.20.20.140:FF:000007">
    <property type="entry name" value="Imidazolonepropionase"/>
    <property type="match status" value="1"/>
</dbReference>
<dbReference type="Gene3D" id="3.20.20.140">
    <property type="entry name" value="Metal-dependent hydrolases"/>
    <property type="match status" value="1"/>
</dbReference>
<dbReference type="Gene3D" id="2.30.40.10">
    <property type="entry name" value="Urease, subunit C, domain 1"/>
    <property type="match status" value="1"/>
</dbReference>
<dbReference type="HAMAP" id="MF_00372">
    <property type="entry name" value="HutI"/>
    <property type="match status" value="1"/>
</dbReference>
<dbReference type="InterPro" id="IPR006680">
    <property type="entry name" value="Amidohydro-rel"/>
</dbReference>
<dbReference type="InterPro" id="IPR005920">
    <property type="entry name" value="HutI"/>
</dbReference>
<dbReference type="InterPro" id="IPR011059">
    <property type="entry name" value="Metal-dep_hydrolase_composite"/>
</dbReference>
<dbReference type="InterPro" id="IPR032466">
    <property type="entry name" value="Metal_Hydrolase"/>
</dbReference>
<dbReference type="NCBIfam" id="TIGR01224">
    <property type="entry name" value="hutI"/>
    <property type="match status" value="1"/>
</dbReference>
<dbReference type="PANTHER" id="PTHR42752">
    <property type="entry name" value="IMIDAZOLONEPROPIONASE"/>
    <property type="match status" value="1"/>
</dbReference>
<dbReference type="PANTHER" id="PTHR42752:SF1">
    <property type="entry name" value="IMIDAZOLONEPROPIONASE-RELATED"/>
    <property type="match status" value="1"/>
</dbReference>
<dbReference type="Pfam" id="PF01979">
    <property type="entry name" value="Amidohydro_1"/>
    <property type="match status" value="1"/>
</dbReference>
<dbReference type="SUPFAM" id="SSF51338">
    <property type="entry name" value="Composite domain of metallo-dependent hydrolases"/>
    <property type="match status" value="1"/>
</dbReference>
<dbReference type="SUPFAM" id="SSF51556">
    <property type="entry name" value="Metallo-dependent hydrolases"/>
    <property type="match status" value="1"/>
</dbReference>
<name>HUTI_STRPD</name>
<feature type="chain" id="PRO_0000306524" description="Imidazolonepropionase">
    <location>
        <begin position="1"/>
        <end position="421"/>
    </location>
</feature>
<feature type="binding site" evidence="1">
    <location>
        <position position="81"/>
    </location>
    <ligand>
        <name>Fe(3+)</name>
        <dbReference type="ChEBI" id="CHEBI:29034"/>
    </ligand>
</feature>
<feature type="binding site" evidence="1">
    <location>
        <position position="81"/>
    </location>
    <ligand>
        <name>Zn(2+)</name>
        <dbReference type="ChEBI" id="CHEBI:29105"/>
    </ligand>
</feature>
<feature type="binding site" evidence="1">
    <location>
        <position position="83"/>
    </location>
    <ligand>
        <name>Fe(3+)</name>
        <dbReference type="ChEBI" id="CHEBI:29034"/>
    </ligand>
</feature>
<feature type="binding site" evidence="1">
    <location>
        <position position="83"/>
    </location>
    <ligand>
        <name>Zn(2+)</name>
        <dbReference type="ChEBI" id="CHEBI:29105"/>
    </ligand>
</feature>
<feature type="binding site" evidence="1">
    <location>
        <position position="90"/>
    </location>
    <ligand>
        <name>4-imidazolone-5-propanoate</name>
        <dbReference type="ChEBI" id="CHEBI:77893"/>
    </ligand>
</feature>
<feature type="binding site" evidence="1">
    <location>
        <position position="153"/>
    </location>
    <ligand>
        <name>4-imidazolone-5-propanoate</name>
        <dbReference type="ChEBI" id="CHEBI:77893"/>
    </ligand>
</feature>
<feature type="binding site" evidence="1">
    <location>
        <position position="153"/>
    </location>
    <ligand>
        <name>N-formimidoyl-L-glutamate</name>
        <dbReference type="ChEBI" id="CHEBI:58928"/>
    </ligand>
</feature>
<feature type="binding site" evidence="1">
    <location>
        <position position="186"/>
    </location>
    <ligand>
        <name>4-imidazolone-5-propanoate</name>
        <dbReference type="ChEBI" id="CHEBI:77893"/>
    </ligand>
</feature>
<feature type="binding site" evidence="1">
    <location>
        <position position="251"/>
    </location>
    <ligand>
        <name>Fe(3+)</name>
        <dbReference type="ChEBI" id="CHEBI:29034"/>
    </ligand>
</feature>
<feature type="binding site" evidence="1">
    <location>
        <position position="251"/>
    </location>
    <ligand>
        <name>Zn(2+)</name>
        <dbReference type="ChEBI" id="CHEBI:29105"/>
    </ligand>
</feature>
<feature type="binding site" evidence="1">
    <location>
        <position position="254"/>
    </location>
    <ligand>
        <name>4-imidazolone-5-propanoate</name>
        <dbReference type="ChEBI" id="CHEBI:77893"/>
    </ligand>
</feature>
<feature type="binding site" evidence="1">
    <location>
        <position position="326"/>
    </location>
    <ligand>
        <name>Fe(3+)</name>
        <dbReference type="ChEBI" id="CHEBI:29034"/>
    </ligand>
</feature>
<feature type="binding site" evidence="1">
    <location>
        <position position="326"/>
    </location>
    <ligand>
        <name>Zn(2+)</name>
        <dbReference type="ChEBI" id="CHEBI:29105"/>
    </ligand>
</feature>
<feature type="binding site" evidence="1">
    <location>
        <position position="328"/>
    </location>
    <ligand>
        <name>N-formimidoyl-L-glutamate</name>
        <dbReference type="ChEBI" id="CHEBI:58928"/>
    </ligand>
</feature>
<feature type="binding site" evidence="1">
    <location>
        <position position="330"/>
    </location>
    <ligand>
        <name>N-formimidoyl-L-glutamate</name>
        <dbReference type="ChEBI" id="CHEBI:58928"/>
    </ligand>
</feature>
<feature type="binding site" evidence="1">
    <location>
        <position position="331"/>
    </location>
    <ligand>
        <name>4-imidazolone-5-propanoate</name>
        <dbReference type="ChEBI" id="CHEBI:77893"/>
    </ligand>
</feature>